<proteinExistence type="inferred from homology"/>
<dbReference type="EMBL" id="AJ627251">
    <property type="protein sequence ID" value="CAF28644.1"/>
    <property type="molecule type" value="Genomic_DNA"/>
</dbReference>
<dbReference type="RefSeq" id="YP_053204.1">
    <property type="nucleotide sequence ID" value="NC_006050.1"/>
</dbReference>
<dbReference type="SMR" id="Q6EW02"/>
<dbReference type="GeneID" id="2896181"/>
<dbReference type="GO" id="GO:0009507">
    <property type="term" value="C:chloroplast"/>
    <property type="evidence" value="ECO:0007669"/>
    <property type="project" value="UniProtKB-SubCell"/>
</dbReference>
<dbReference type="GO" id="GO:0015934">
    <property type="term" value="C:large ribosomal subunit"/>
    <property type="evidence" value="ECO:0007669"/>
    <property type="project" value="InterPro"/>
</dbReference>
<dbReference type="GO" id="GO:0003735">
    <property type="term" value="F:structural constituent of ribosome"/>
    <property type="evidence" value="ECO:0007669"/>
    <property type="project" value="InterPro"/>
</dbReference>
<dbReference type="GO" id="GO:0006412">
    <property type="term" value="P:translation"/>
    <property type="evidence" value="ECO:0007669"/>
    <property type="project" value="UniProtKB-UniRule"/>
</dbReference>
<dbReference type="HAMAP" id="MF_00340">
    <property type="entry name" value="Ribosomal_bL32"/>
    <property type="match status" value="1"/>
</dbReference>
<dbReference type="InterPro" id="IPR002677">
    <property type="entry name" value="Ribosomal_bL32"/>
</dbReference>
<dbReference type="InterPro" id="IPR044958">
    <property type="entry name" value="Ribosomal_bL32_plant/cyanobact"/>
</dbReference>
<dbReference type="InterPro" id="IPR011332">
    <property type="entry name" value="Ribosomal_zn-bd"/>
</dbReference>
<dbReference type="PANTHER" id="PTHR36083">
    <property type="entry name" value="50S RIBOSOMAL PROTEIN L32, CHLOROPLASTIC"/>
    <property type="match status" value="1"/>
</dbReference>
<dbReference type="PANTHER" id="PTHR36083:SF1">
    <property type="entry name" value="LARGE RIBOSOMAL SUBUNIT PROTEIN BL32C"/>
    <property type="match status" value="1"/>
</dbReference>
<dbReference type="Pfam" id="PF01783">
    <property type="entry name" value="Ribosomal_L32p"/>
    <property type="match status" value="1"/>
</dbReference>
<dbReference type="SUPFAM" id="SSF57829">
    <property type="entry name" value="Zn-binding ribosomal proteins"/>
    <property type="match status" value="1"/>
</dbReference>
<reference key="1">
    <citation type="journal article" date="2004" name="Mol. Biol. Evol.">
        <title>The chloroplast genome of Nymphaea alba: whole-genome analyses and the problem of identifying the most basal angiosperm.</title>
        <authorList>
            <person name="Goremykin V.V."/>
            <person name="Hirsch-Ernst K.I."/>
            <person name="Woelfl S."/>
            <person name="Hellwig F.H."/>
        </authorList>
    </citation>
    <scope>NUCLEOTIDE SEQUENCE [LARGE SCALE GENOMIC DNA]</scope>
</reference>
<keyword id="KW-0150">Chloroplast</keyword>
<keyword id="KW-0934">Plastid</keyword>
<keyword id="KW-0687">Ribonucleoprotein</keyword>
<keyword id="KW-0689">Ribosomal protein</keyword>
<feature type="chain" id="PRO_0000172466" description="Large ribosomal subunit protein bL32c">
    <location>
        <begin position="1"/>
        <end position="52"/>
    </location>
</feature>
<evidence type="ECO:0000255" key="1">
    <source>
        <dbReference type="HAMAP-Rule" id="MF_00340"/>
    </source>
</evidence>
<evidence type="ECO:0000305" key="2"/>
<name>RK32_NYMAL</name>
<gene>
    <name evidence="1" type="primary">rpl32</name>
</gene>
<accession>Q6EW02</accession>
<protein>
    <recommendedName>
        <fullName evidence="1">Large ribosomal subunit protein bL32c</fullName>
    </recommendedName>
    <alternativeName>
        <fullName evidence="2">50S ribosomal protein L32, chloroplastic</fullName>
    </alternativeName>
</protein>
<sequence length="52" mass="6105">MAVPKKRTSISKKHIRRNFWKRKGYWAAVKAFSLAKSISTGYSKGFFVRQKK</sequence>
<comment type="subcellular location">
    <subcellularLocation>
        <location>Plastid</location>
        <location>Chloroplast</location>
    </subcellularLocation>
</comment>
<comment type="similarity">
    <text evidence="1">Belongs to the bacterial ribosomal protein bL32 family.</text>
</comment>
<organism>
    <name type="scientific">Nymphaea alba</name>
    <name type="common">White water-lily</name>
    <name type="synonym">Castalia alba</name>
    <dbReference type="NCBI Taxonomy" id="34301"/>
    <lineage>
        <taxon>Eukaryota</taxon>
        <taxon>Viridiplantae</taxon>
        <taxon>Streptophyta</taxon>
        <taxon>Embryophyta</taxon>
        <taxon>Tracheophyta</taxon>
        <taxon>Spermatophyta</taxon>
        <taxon>Magnoliopsida</taxon>
        <taxon>Nymphaeales</taxon>
        <taxon>Nymphaeaceae</taxon>
        <taxon>Nymphaea</taxon>
    </lineage>
</organism>
<geneLocation type="chloroplast"/>